<protein>
    <recommendedName>
        <fullName>Uncharacterized protein Rv2307c</fullName>
    </recommendedName>
</protein>
<sequence length="281" mass="29671">MSLKRCRALPVVAIVALVASGVIMFIWSQQRRLIYFPSAGPVPSASSVLPAGRDVVVETQDGMRLGGWYFPHTSGGSGPAVLVCNGNAGDRSMRAELAVALHGLGLSVLLFDYRGYGGNPGRPSEQGLAADARAAQEWLSGQSDVDPARIAYFGESLGAAVAVGLAVQRPPAALVLRSPFTSLAEVGAVHYPWLPLRRLLLDHYPSIERIASVHAPVLVIAGGSDDIVPATLSERLVAAAAEPKRYVVVPGVGHNDPELLDGRVMLDAIRRFLTETAVLGQ</sequence>
<comment type="subcellular location">
    <subcellularLocation>
        <location evidence="2">Cell membrane</location>
        <topology evidence="2">Multi-pass membrane protein</topology>
    </subcellularLocation>
</comment>
<comment type="similarity">
    <text evidence="2">To S.pombe bem46 and yeast YNL320w.</text>
</comment>
<organism>
    <name type="scientific">Mycobacterium tuberculosis (strain ATCC 25618 / H37Rv)</name>
    <dbReference type="NCBI Taxonomy" id="83332"/>
    <lineage>
        <taxon>Bacteria</taxon>
        <taxon>Bacillati</taxon>
        <taxon>Actinomycetota</taxon>
        <taxon>Actinomycetes</taxon>
        <taxon>Mycobacteriales</taxon>
        <taxon>Mycobacteriaceae</taxon>
        <taxon>Mycobacterium</taxon>
        <taxon>Mycobacterium tuberculosis complex</taxon>
    </lineage>
</organism>
<feature type="chain" id="PRO_0000104016" description="Uncharacterized protein Rv2307c">
    <location>
        <begin position="1"/>
        <end position="281"/>
    </location>
</feature>
<feature type="transmembrane region" description="Helical" evidence="1">
    <location>
        <begin position="8"/>
        <end position="28"/>
    </location>
</feature>
<feature type="transmembrane region" description="Helical" evidence="1">
    <location>
        <begin position="97"/>
        <end position="117"/>
    </location>
</feature>
<feature type="transmembrane region" description="Helical" evidence="1">
    <location>
        <begin position="147"/>
        <end position="167"/>
    </location>
</feature>
<feature type="transmembrane region" description="Helical" evidence="1">
    <location>
        <begin position="210"/>
        <end position="230"/>
    </location>
</feature>
<name>Y2307_MYCTU</name>
<reference key="1">
    <citation type="journal article" date="1998" name="Nature">
        <title>Deciphering the biology of Mycobacterium tuberculosis from the complete genome sequence.</title>
        <authorList>
            <person name="Cole S.T."/>
            <person name="Brosch R."/>
            <person name="Parkhill J."/>
            <person name="Garnier T."/>
            <person name="Churcher C.M."/>
            <person name="Harris D.E."/>
            <person name="Gordon S.V."/>
            <person name="Eiglmeier K."/>
            <person name="Gas S."/>
            <person name="Barry C.E. III"/>
            <person name="Tekaia F."/>
            <person name="Badcock K."/>
            <person name="Basham D."/>
            <person name="Brown D."/>
            <person name="Chillingworth T."/>
            <person name="Connor R."/>
            <person name="Davies R.M."/>
            <person name="Devlin K."/>
            <person name="Feltwell T."/>
            <person name="Gentles S."/>
            <person name="Hamlin N."/>
            <person name="Holroyd S."/>
            <person name="Hornsby T."/>
            <person name="Jagels K."/>
            <person name="Krogh A."/>
            <person name="McLean J."/>
            <person name="Moule S."/>
            <person name="Murphy L.D."/>
            <person name="Oliver S."/>
            <person name="Osborne J."/>
            <person name="Quail M.A."/>
            <person name="Rajandream M.A."/>
            <person name="Rogers J."/>
            <person name="Rutter S."/>
            <person name="Seeger K."/>
            <person name="Skelton S."/>
            <person name="Squares S."/>
            <person name="Squares R."/>
            <person name="Sulston J.E."/>
            <person name="Taylor K."/>
            <person name="Whitehead S."/>
            <person name="Barrell B.G."/>
        </authorList>
    </citation>
    <scope>NUCLEOTIDE SEQUENCE [LARGE SCALE GENOMIC DNA]</scope>
    <source>
        <strain>ATCC 25618 / H37Rv</strain>
    </source>
</reference>
<reference key="2">
    <citation type="journal article" date="2011" name="Mol. Cell. Proteomics">
        <title>Proteogenomic analysis of Mycobacterium tuberculosis by high resolution mass spectrometry.</title>
        <authorList>
            <person name="Kelkar D.S."/>
            <person name="Kumar D."/>
            <person name="Kumar P."/>
            <person name="Balakrishnan L."/>
            <person name="Muthusamy B."/>
            <person name="Yadav A.K."/>
            <person name="Shrivastava P."/>
            <person name="Marimuthu A."/>
            <person name="Anand S."/>
            <person name="Sundaram H."/>
            <person name="Kingsbury R."/>
            <person name="Harsha H.C."/>
            <person name="Nair B."/>
            <person name="Prasad T.S."/>
            <person name="Chauhan D.S."/>
            <person name="Katoch K."/>
            <person name="Katoch V.M."/>
            <person name="Kumar P."/>
            <person name="Chaerkady R."/>
            <person name="Ramachandran S."/>
            <person name="Dash D."/>
            <person name="Pandey A."/>
        </authorList>
    </citation>
    <scope>IDENTIFICATION BY MASS SPECTROMETRY [LARGE SCALE ANALYSIS]</scope>
    <source>
        <strain>ATCC 25618 / H37Rv</strain>
    </source>
</reference>
<proteinExistence type="evidence at protein level"/>
<dbReference type="EMBL" id="AL123456">
    <property type="protein sequence ID" value="CCP45090.1"/>
    <property type="molecule type" value="Genomic_DNA"/>
</dbReference>
<dbReference type="PIR" id="G70734">
    <property type="entry name" value="G70734"/>
</dbReference>
<dbReference type="RefSeq" id="NP_216823.1">
    <property type="nucleotide sequence ID" value="NC_000962.3"/>
</dbReference>
<dbReference type="RefSeq" id="WP_003906792.1">
    <property type="nucleotide sequence ID" value="NZ_NVQJ01000012.1"/>
</dbReference>
<dbReference type="SMR" id="P9WLC7"/>
<dbReference type="FunCoup" id="P9WLC7">
    <property type="interactions" value="323"/>
</dbReference>
<dbReference type="STRING" id="83332.Rv2307c"/>
<dbReference type="ESTHER" id="myctu-Y2307">
    <property type="family name" value="ABHD13-BEM46"/>
</dbReference>
<dbReference type="PaxDb" id="83332-Rv2307c"/>
<dbReference type="DNASU" id="885277"/>
<dbReference type="GeneID" id="885277"/>
<dbReference type="KEGG" id="mtu:Rv2307c"/>
<dbReference type="KEGG" id="mtv:RVBD_2307c"/>
<dbReference type="TubercuList" id="Rv2307c"/>
<dbReference type="eggNOG" id="COG1073">
    <property type="taxonomic scope" value="Bacteria"/>
</dbReference>
<dbReference type="InParanoid" id="P9WLC7"/>
<dbReference type="OrthoDB" id="9777090at2"/>
<dbReference type="PhylomeDB" id="P9WLC7"/>
<dbReference type="Proteomes" id="UP000001584">
    <property type="component" value="Chromosome"/>
</dbReference>
<dbReference type="GO" id="GO:0009274">
    <property type="term" value="C:peptidoglycan-based cell wall"/>
    <property type="evidence" value="ECO:0007005"/>
    <property type="project" value="MTBBASE"/>
</dbReference>
<dbReference type="GO" id="GO:0005886">
    <property type="term" value="C:plasma membrane"/>
    <property type="evidence" value="ECO:0007669"/>
    <property type="project" value="UniProtKB-SubCell"/>
</dbReference>
<dbReference type="GO" id="GO:0052167">
    <property type="term" value="P:symbiont-mediated perturbation of host innate immune response"/>
    <property type="evidence" value="ECO:0000314"/>
    <property type="project" value="MTBBASE"/>
</dbReference>
<dbReference type="Gene3D" id="3.40.50.1820">
    <property type="entry name" value="alpha/beta hydrolase"/>
    <property type="match status" value="1"/>
</dbReference>
<dbReference type="InterPro" id="IPR029058">
    <property type="entry name" value="AB_hydrolase_fold"/>
</dbReference>
<dbReference type="InterPro" id="IPR022742">
    <property type="entry name" value="Hydrolase_4"/>
</dbReference>
<dbReference type="PANTHER" id="PTHR12277">
    <property type="entry name" value="ALPHA/BETA HYDROLASE DOMAIN-CONTAINING PROTEIN"/>
    <property type="match status" value="1"/>
</dbReference>
<dbReference type="PANTHER" id="PTHR12277:SF79">
    <property type="entry name" value="XAA-PRO DIPEPTIDYL-PEPTIDASE-RELATED"/>
    <property type="match status" value="1"/>
</dbReference>
<dbReference type="Pfam" id="PF12146">
    <property type="entry name" value="Hydrolase_4"/>
    <property type="match status" value="1"/>
</dbReference>
<dbReference type="SUPFAM" id="SSF53474">
    <property type="entry name" value="alpha/beta-Hydrolases"/>
    <property type="match status" value="1"/>
</dbReference>
<keyword id="KW-1003">Cell membrane</keyword>
<keyword id="KW-0472">Membrane</keyword>
<keyword id="KW-1185">Reference proteome</keyword>
<keyword id="KW-0812">Transmembrane</keyword>
<keyword id="KW-1133">Transmembrane helix</keyword>
<gene>
    <name type="ordered locus">Rv2307c</name>
    <name type="ORF">MTCY339.02</name>
</gene>
<evidence type="ECO:0000255" key="1"/>
<evidence type="ECO:0000305" key="2"/>
<accession>P9WLC7</accession>
<accession>L0T9F3</accession>
<accession>Q50658</accession>